<feature type="chain" id="PRO_0000268476" description="Bifunctional protein FolD">
    <location>
        <begin position="1"/>
        <end position="295"/>
    </location>
</feature>
<feature type="binding site" evidence="1">
    <location>
        <begin position="166"/>
        <end position="168"/>
    </location>
    <ligand>
        <name>NADP(+)</name>
        <dbReference type="ChEBI" id="CHEBI:58349"/>
    </ligand>
</feature>
<feature type="binding site" evidence="1">
    <location>
        <position position="191"/>
    </location>
    <ligand>
        <name>NADP(+)</name>
        <dbReference type="ChEBI" id="CHEBI:58349"/>
    </ligand>
</feature>
<feature type="binding site" evidence="1">
    <location>
        <position position="232"/>
    </location>
    <ligand>
        <name>NADP(+)</name>
        <dbReference type="ChEBI" id="CHEBI:58349"/>
    </ligand>
</feature>
<reference key="1">
    <citation type="submission" date="2006-03" db="EMBL/GenBank/DDBJ databases">
        <title>Complete sequence of Rhodopseudomonas palustris BisB5.</title>
        <authorList>
            <consortium name="US DOE Joint Genome Institute"/>
            <person name="Copeland A."/>
            <person name="Lucas S."/>
            <person name="Lapidus A."/>
            <person name="Barry K."/>
            <person name="Detter J.C."/>
            <person name="Glavina del Rio T."/>
            <person name="Hammon N."/>
            <person name="Israni S."/>
            <person name="Dalin E."/>
            <person name="Tice H."/>
            <person name="Pitluck S."/>
            <person name="Chain P."/>
            <person name="Malfatti S."/>
            <person name="Shin M."/>
            <person name="Vergez L."/>
            <person name="Schmutz J."/>
            <person name="Larimer F."/>
            <person name="Land M."/>
            <person name="Hauser L."/>
            <person name="Pelletier D.A."/>
            <person name="Kyrpides N."/>
            <person name="Lykidis A."/>
            <person name="Oda Y."/>
            <person name="Harwood C.S."/>
            <person name="Richardson P."/>
        </authorList>
    </citation>
    <scope>NUCLEOTIDE SEQUENCE [LARGE SCALE GENOMIC DNA]</scope>
    <source>
        <strain>BisB5</strain>
    </source>
</reference>
<sequence>MTARIIDGKIISADLRGRVAAEVTRIKAEHGITPGLAVVLVGSDPASEVYVRSKHKQTQEAGMASFEHRLPADVAQADLLALIGQLNADPAVHGILVQLPLPKGLDSNAVIDAIDPAKDVDGLNPVNAGRLASGLFALTPCTPLGCIIMAKQVHASLEGMNAIVIGRSNLVGKPLVQLLLNENATVTIAHSRSRDLPALCRQADLVFAAVGKAEMVKGDWIKPGATVIDVGINRTPSPDGGKDKLVGDVAFHEAKDVAGAITPVPGGVGLMTVACLLVNTVRAASAIHGLPKPGV</sequence>
<evidence type="ECO:0000255" key="1">
    <source>
        <dbReference type="HAMAP-Rule" id="MF_01576"/>
    </source>
</evidence>
<name>FOLD_RHOPS</name>
<dbReference type="EC" id="1.5.1.5" evidence="1"/>
<dbReference type="EC" id="3.5.4.9" evidence="1"/>
<dbReference type="EMBL" id="CP000283">
    <property type="protein sequence ID" value="ABE37932.1"/>
    <property type="molecule type" value="Genomic_DNA"/>
</dbReference>
<dbReference type="SMR" id="Q13DA7"/>
<dbReference type="STRING" id="316057.RPD_0694"/>
<dbReference type="KEGG" id="rpd:RPD_0694"/>
<dbReference type="eggNOG" id="COG0190">
    <property type="taxonomic scope" value="Bacteria"/>
</dbReference>
<dbReference type="HOGENOM" id="CLU_034045_2_1_5"/>
<dbReference type="BioCyc" id="RPAL316057:RPD_RS03545-MONOMER"/>
<dbReference type="UniPathway" id="UPA00193"/>
<dbReference type="Proteomes" id="UP000001818">
    <property type="component" value="Chromosome"/>
</dbReference>
<dbReference type="GO" id="GO:0005829">
    <property type="term" value="C:cytosol"/>
    <property type="evidence" value="ECO:0007669"/>
    <property type="project" value="TreeGrafter"/>
</dbReference>
<dbReference type="GO" id="GO:0004477">
    <property type="term" value="F:methenyltetrahydrofolate cyclohydrolase activity"/>
    <property type="evidence" value="ECO:0007669"/>
    <property type="project" value="UniProtKB-UniRule"/>
</dbReference>
<dbReference type="GO" id="GO:0004488">
    <property type="term" value="F:methylenetetrahydrofolate dehydrogenase (NADP+) activity"/>
    <property type="evidence" value="ECO:0007669"/>
    <property type="project" value="UniProtKB-UniRule"/>
</dbReference>
<dbReference type="GO" id="GO:0000105">
    <property type="term" value="P:L-histidine biosynthetic process"/>
    <property type="evidence" value="ECO:0007669"/>
    <property type="project" value="UniProtKB-KW"/>
</dbReference>
<dbReference type="GO" id="GO:0009086">
    <property type="term" value="P:methionine biosynthetic process"/>
    <property type="evidence" value="ECO:0007669"/>
    <property type="project" value="UniProtKB-KW"/>
</dbReference>
<dbReference type="GO" id="GO:0006164">
    <property type="term" value="P:purine nucleotide biosynthetic process"/>
    <property type="evidence" value="ECO:0007669"/>
    <property type="project" value="UniProtKB-KW"/>
</dbReference>
<dbReference type="GO" id="GO:0035999">
    <property type="term" value="P:tetrahydrofolate interconversion"/>
    <property type="evidence" value="ECO:0007669"/>
    <property type="project" value="UniProtKB-UniRule"/>
</dbReference>
<dbReference type="CDD" id="cd01080">
    <property type="entry name" value="NAD_bind_m-THF_DH_Cyclohyd"/>
    <property type="match status" value="1"/>
</dbReference>
<dbReference type="FunFam" id="3.40.50.720:FF:000006">
    <property type="entry name" value="Bifunctional protein FolD"/>
    <property type="match status" value="1"/>
</dbReference>
<dbReference type="FunFam" id="3.40.50.10860:FF:000005">
    <property type="entry name" value="C-1-tetrahydrofolate synthase, cytoplasmic, putative"/>
    <property type="match status" value="1"/>
</dbReference>
<dbReference type="Gene3D" id="3.40.50.10860">
    <property type="entry name" value="Leucine Dehydrogenase, chain A, domain 1"/>
    <property type="match status" value="1"/>
</dbReference>
<dbReference type="Gene3D" id="3.40.50.720">
    <property type="entry name" value="NAD(P)-binding Rossmann-like Domain"/>
    <property type="match status" value="1"/>
</dbReference>
<dbReference type="HAMAP" id="MF_01576">
    <property type="entry name" value="THF_DHG_CYH"/>
    <property type="match status" value="1"/>
</dbReference>
<dbReference type="InterPro" id="IPR046346">
    <property type="entry name" value="Aminoacid_DH-like_N_sf"/>
</dbReference>
<dbReference type="InterPro" id="IPR036291">
    <property type="entry name" value="NAD(P)-bd_dom_sf"/>
</dbReference>
<dbReference type="InterPro" id="IPR000672">
    <property type="entry name" value="THF_DH/CycHdrlase"/>
</dbReference>
<dbReference type="InterPro" id="IPR020630">
    <property type="entry name" value="THF_DH/CycHdrlase_cat_dom"/>
</dbReference>
<dbReference type="InterPro" id="IPR020867">
    <property type="entry name" value="THF_DH/CycHdrlase_CS"/>
</dbReference>
<dbReference type="InterPro" id="IPR020631">
    <property type="entry name" value="THF_DH/CycHdrlase_NAD-bd_dom"/>
</dbReference>
<dbReference type="NCBIfam" id="NF010783">
    <property type="entry name" value="PRK14186.1"/>
    <property type="match status" value="1"/>
</dbReference>
<dbReference type="NCBIfam" id="NF010785">
    <property type="entry name" value="PRK14188.1"/>
    <property type="match status" value="1"/>
</dbReference>
<dbReference type="PANTHER" id="PTHR48099:SF5">
    <property type="entry name" value="C-1-TETRAHYDROFOLATE SYNTHASE, CYTOPLASMIC"/>
    <property type="match status" value="1"/>
</dbReference>
<dbReference type="PANTHER" id="PTHR48099">
    <property type="entry name" value="C-1-TETRAHYDROFOLATE SYNTHASE, CYTOPLASMIC-RELATED"/>
    <property type="match status" value="1"/>
</dbReference>
<dbReference type="Pfam" id="PF00763">
    <property type="entry name" value="THF_DHG_CYH"/>
    <property type="match status" value="1"/>
</dbReference>
<dbReference type="Pfam" id="PF02882">
    <property type="entry name" value="THF_DHG_CYH_C"/>
    <property type="match status" value="1"/>
</dbReference>
<dbReference type="PRINTS" id="PR00085">
    <property type="entry name" value="THFDHDRGNASE"/>
</dbReference>
<dbReference type="SUPFAM" id="SSF53223">
    <property type="entry name" value="Aminoacid dehydrogenase-like, N-terminal domain"/>
    <property type="match status" value="1"/>
</dbReference>
<dbReference type="SUPFAM" id="SSF51735">
    <property type="entry name" value="NAD(P)-binding Rossmann-fold domains"/>
    <property type="match status" value="1"/>
</dbReference>
<dbReference type="PROSITE" id="PS00766">
    <property type="entry name" value="THF_DHG_CYH_1"/>
    <property type="match status" value="1"/>
</dbReference>
<gene>
    <name evidence="1" type="primary">folD</name>
    <name type="ordered locus">RPD_0694</name>
</gene>
<comment type="function">
    <text evidence="1">Catalyzes the oxidation of 5,10-methylenetetrahydrofolate to 5,10-methenyltetrahydrofolate and then the hydrolysis of 5,10-methenyltetrahydrofolate to 10-formyltetrahydrofolate.</text>
</comment>
<comment type="catalytic activity">
    <reaction evidence="1">
        <text>(6R)-5,10-methylene-5,6,7,8-tetrahydrofolate + NADP(+) = (6R)-5,10-methenyltetrahydrofolate + NADPH</text>
        <dbReference type="Rhea" id="RHEA:22812"/>
        <dbReference type="ChEBI" id="CHEBI:15636"/>
        <dbReference type="ChEBI" id="CHEBI:57455"/>
        <dbReference type="ChEBI" id="CHEBI:57783"/>
        <dbReference type="ChEBI" id="CHEBI:58349"/>
        <dbReference type="EC" id="1.5.1.5"/>
    </reaction>
</comment>
<comment type="catalytic activity">
    <reaction evidence="1">
        <text>(6R)-5,10-methenyltetrahydrofolate + H2O = (6R)-10-formyltetrahydrofolate + H(+)</text>
        <dbReference type="Rhea" id="RHEA:23700"/>
        <dbReference type="ChEBI" id="CHEBI:15377"/>
        <dbReference type="ChEBI" id="CHEBI:15378"/>
        <dbReference type="ChEBI" id="CHEBI:57455"/>
        <dbReference type="ChEBI" id="CHEBI:195366"/>
        <dbReference type="EC" id="3.5.4.9"/>
    </reaction>
</comment>
<comment type="pathway">
    <text evidence="1">One-carbon metabolism; tetrahydrofolate interconversion.</text>
</comment>
<comment type="subunit">
    <text evidence="1">Homodimer.</text>
</comment>
<comment type="similarity">
    <text evidence="1">Belongs to the tetrahydrofolate dehydrogenase/cyclohydrolase family.</text>
</comment>
<organism>
    <name type="scientific">Rhodopseudomonas palustris (strain BisB5)</name>
    <dbReference type="NCBI Taxonomy" id="316057"/>
    <lineage>
        <taxon>Bacteria</taxon>
        <taxon>Pseudomonadati</taxon>
        <taxon>Pseudomonadota</taxon>
        <taxon>Alphaproteobacteria</taxon>
        <taxon>Hyphomicrobiales</taxon>
        <taxon>Nitrobacteraceae</taxon>
        <taxon>Rhodopseudomonas</taxon>
    </lineage>
</organism>
<accession>Q13DA7</accession>
<proteinExistence type="inferred from homology"/>
<protein>
    <recommendedName>
        <fullName evidence="1">Bifunctional protein FolD</fullName>
    </recommendedName>
    <domain>
        <recommendedName>
            <fullName evidence="1">Methylenetetrahydrofolate dehydrogenase</fullName>
            <ecNumber evidence="1">1.5.1.5</ecNumber>
        </recommendedName>
    </domain>
    <domain>
        <recommendedName>
            <fullName evidence="1">Methenyltetrahydrofolate cyclohydrolase</fullName>
            <ecNumber evidence="1">3.5.4.9</ecNumber>
        </recommendedName>
    </domain>
</protein>
<keyword id="KW-0028">Amino-acid biosynthesis</keyword>
<keyword id="KW-0368">Histidine biosynthesis</keyword>
<keyword id="KW-0378">Hydrolase</keyword>
<keyword id="KW-0486">Methionine biosynthesis</keyword>
<keyword id="KW-0511">Multifunctional enzyme</keyword>
<keyword id="KW-0521">NADP</keyword>
<keyword id="KW-0554">One-carbon metabolism</keyword>
<keyword id="KW-0560">Oxidoreductase</keyword>
<keyword id="KW-0658">Purine biosynthesis</keyword>